<protein>
    <recommendedName>
        <fullName>Altered inheritance of mitochondria protein 9, mitochondrial</fullName>
    </recommendedName>
    <alternativeName>
        <fullName>Found in mitochondrial proteome protein 29</fullName>
    </alternativeName>
</protein>
<feature type="transit peptide" description="Mitochondrion" evidence="2">
    <location>
        <begin position="1"/>
        <end position="71"/>
    </location>
</feature>
<feature type="chain" id="PRO_0000408725" description="Altered inheritance of mitochondria protein 9, mitochondrial">
    <location>
        <begin position="72"/>
        <end position="635"/>
    </location>
</feature>
<feature type="region of interest" description="Disordered" evidence="3">
    <location>
        <begin position="1"/>
        <end position="49"/>
    </location>
</feature>
<feature type="compositionally biased region" description="Polar residues" evidence="3">
    <location>
        <begin position="1"/>
        <end position="17"/>
    </location>
</feature>
<evidence type="ECO:0000250" key="1"/>
<evidence type="ECO:0000255" key="2"/>
<evidence type="ECO:0000256" key="3">
    <source>
        <dbReference type="SAM" id="MobiDB-lite"/>
    </source>
</evidence>
<evidence type="ECO:0000305" key="4"/>
<reference key="1">
    <citation type="journal article" date="2009" name="Nature">
        <title>Evolution of pathogenicity and sexual reproduction in eight Candida genomes.</title>
        <authorList>
            <person name="Butler G."/>
            <person name="Rasmussen M.D."/>
            <person name="Lin M.F."/>
            <person name="Santos M.A.S."/>
            <person name="Sakthikumar S."/>
            <person name="Munro C.A."/>
            <person name="Rheinbay E."/>
            <person name="Grabherr M."/>
            <person name="Forche A."/>
            <person name="Reedy J.L."/>
            <person name="Agrafioti I."/>
            <person name="Arnaud M.B."/>
            <person name="Bates S."/>
            <person name="Brown A.J.P."/>
            <person name="Brunke S."/>
            <person name="Costanzo M.C."/>
            <person name="Fitzpatrick D.A."/>
            <person name="de Groot P.W.J."/>
            <person name="Harris D."/>
            <person name="Hoyer L.L."/>
            <person name="Hube B."/>
            <person name="Klis F.M."/>
            <person name="Kodira C."/>
            <person name="Lennard N."/>
            <person name="Logue M.E."/>
            <person name="Martin R."/>
            <person name="Neiman A.M."/>
            <person name="Nikolaou E."/>
            <person name="Quail M.A."/>
            <person name="Quinn J."/>
            <person name="Santos M.C."/>
            <person name="Schmitzberger F.F."/>
            <person name="Sherlock G."/>
            <person name="Shah P."/>
            <person name="Silverstein K.A.T."/>
            <person name="Skrzypek M.S."/>
            <person name="Soll D."/>
            <person name="Staggs R."/>
            <person name="Stansfield I."/>
            <person name="Stumpf M.P.H."/>
            <person name="Sudbery P.E."/>
            <person name="Srikantha T."/>
            <person name="Zeng Q."/>
            <person name="Berman J."/>
            <person name="Berriman M."/>
            <person name="Heitman J."/>
            <person name="Gow N.A.R."/>
            <person name="Lorenz M.C."/>
            <person name="Birren B.W."/>
            <person name="Kellis M."/>
            <person name="Cuomo C.A."/>
        </authorList>
    </citation>
    <scope>NUCLEOTIDE SEQUENCE [LARGE SCALE GENOMIC DNA]</scope>
    <source>
        <strain>ATCC 11503 / BCRC 21390 / CBS 2605 / JCM 1781 / NBRC 1676 / NRRL YB-4239</strain>
    </source>
</reference>
<comment type="subcellular location">
    <subcellularLocation>
        <location evidence="1">Mitochondrion</location>
    </subcellularLocation>
</comment>
<comment type="similarity">
    <text evidence="4">Belongs to the AIM9 family.</text>
</comment>
<sequence>MLSKSITRSLKQQVTKKSLSKAIAPSIARSLATSTPPSPSDGLKPSHVYTKLSHTDDPARSRFFQYSWGSWLKDDALKKKQRETIFSIEGLTAYLNSVDSLRVPETAKLLQPKEEQGTFVLQNNLTFDVLGAKSDVLLIKSISSIHEGKHHRIYKLTLSTGKDLVLRIPYKLESDTAIASKIKSEVATSDFLKLKLGLDVPKIIAYGPDRNNAIRSPFILQEFIEGELLMKKWNPLEPDSDKTDEDLKSVIAPIAEFQDKILEPVFTKFGSLYFYNDVTTELQQNGEPYEGENDEKLLKRWRVGPSVEKAFTKGKNKLSQDVIDQYNGPWDASNPEQVMTSVAEIEIENARNKLAIVDADAGDVTSKDLLQHQITTFEHLKQITPKLLNSKSPSIKNVEELFKPRLYVPDLDPLNVIQSTEGKNYFIDFEGSTIKPFILSSYPKFVEYQGAKIYDLKVDIPGFDEMDPVEKQQYEFMYYKTRNERLWEVELNKHRHDLIAVASPHIKVLKSPYLQALDLKHSKDYLYVEGAIVQLQSMWEAYVANELVKQDKDDKEFPIKYDEKYLDQYQLDLSDHQMETVSSPFSATGGWIPQDMFRTLKEQGILVEVGEGNYEIKTDKILENPPSETGEEPKA</sequence>
<proteinExistence type="inferred from homology"/>
<dbReference type="EMBL" id="CH981525">
    <property type="protein sequence ID" value="EDK43221.1"/>
    <property type="molecule type" value="Genomic_DNA"/>
</dbReference>
<dbReference type="RefSeq" id="XP_001526571.1">
    <property type="nucleotide sequence ID" value="XM_001526521.1"/>
</dbReference>
<dbReference type="FunCoup" id="A5DVL3">
    <property type="interactions" value="18"/>
</dbReference>
<dbReference type="STRING" id="379508.A5DVL3"/>
<dbReference type="VEuPathDB" id="FungiDB:LELG_01399"/>
<dbReference type="eggNOG" id="ENOG502QV1E">
    <property type="taxonomic scope" value="Eukaryota"/>
</dbReference>
<dbReference type="HOGENOM" id="CLU_019189_0_1_1"/>
<dbReference type="InParanoid" id="A5DVL3"/>
<dbReference type="OMA" id="GWIPQDM"/>
<dbReference type="OrthoDB" id="2968323at2759"/>
<dbReference type="Proteomes" id="UP000001996">
    <property type="component" value="Unassembled WGS sequence"/>
</dbReference>
<dbReference type="GO" id="GO:0005739">
    <property type="term" value="C:mitochondrion"/>
    <property type="evidence" value="ECO:0007669"/>
    <property type="project" value="UniProtKB-SubCell"/>
</dbReference>
<dbReference type="Gene3D" id="3.30.200.20">
    <property type="entry name" value="Phosphorylase Kinase, domain 1"/>
    <property type="match status" value="1"/>
</dbReference>
<dbReference type="InterPro" id="IPR011009">
    <property type="entry name" value="Kinase-like_dom_sf"/>
</dbReference>
<dbReference type="InterPro" id="IPR051035">
    <property type="entry name" value="Mito_inheritance_9"/>
</dbReference>
<dbReference type="PANTHER" id="PTHR36091">
    <property type="entry name" value="ALTERED INHERITANCE OF MITOCHONDRIA PROTEIN 9, MITOCHONDRIAL"/>
    <property type="match status" value="1"/>
</dbReference>
<dbReference type="PANTHER" id="PTHR36091:SF1">
    <property type="entry name" value="ALTERED INHERITANCE OF MITOCHONDRIA PROTEIN 9, MITOCHONDRIAL"/>
    <property type="match status" value="1"/>
</dbReference>
<dbReference type="SUPFAM" id="SSF56112">
    <property type="entry name" value="Protein kinase-like (PK-like)"/>
    <property type="match status" value="1"/>
</dbReference>
<organism>
    <name type="scientific">Lodderomyces elongisporus (strain ATCC 11503 / CBS 2605 / JCM 1781 / NBRC 1676 / NRRL YB-4239)</name>
    <name type="common">Yeast</name>
    <name type="synonym">Saccharomyces elongisporus</name>
    <dbReference type="NCBI Taxonomy" id="379508"/>
    <lineage>
        <taxon>Eukaryota</taxon>
        <taxon>Fungi</taxon>
        <taxon>Dikarya</taxon>
        <taxon>Ascomycota</taxon>
        <taxon>Saccharomycotina</taxon>
        <taxon>Pichiomycetes</taxon>
        <taxon>Debaryomycetaceae</taxon>
        <taxon>Candida/Lodderomyces clade</taxon>
        <taxon>Lodderomyces</taxon>
    </lineage>
</organism>
<gene>
    <name type="primary">AIM9</name>
    <name type="synonym">FMP29</name>
    <name type="ORF">LELG_01399</name>
</gene>
<accession>A5DVL3</accession>
<name>AIM9_LODEL</name>
<keyword id="KW-0496">Mitochondrion</keyword>
<keyword id="KW-1185">Reference proteome</keyword>
<keyword id="KW-0809">Transit peptide</keyword>